<comment type="function">
    <text>This protein is essential for phi-80 DNA synthesis.</text>
</comment>
<comment type="miscellaneous">
    <text>Presumably, its N-terminal half determines specific interaction with the replication origin on the phage DNA, while its C-terminal half binds specifically to the gene 14 protein.</text>
</comment>
<comment type="similarity">
    <text evidence="3">Belongs to the phage O protein family.</text>
</comment>
<name>VG15_BPPH8</name>
<sequence length="302" mass="34333">MSNTAEIINFPNKTEQPGGRMADLSNGYTKVANEIQQLKPRLRLSGREWQCFEAVIWLTYGWNKKQDRVTNTVIAELTGLSDTHVSDALKSLAERKIIFSQKQGMMKIVGVNTDLSAWILDKPETGRKFPKTGKSFPKSGITFPKTVDTQYKNKNSIKRSSSENSDESSDARLKKFLSTHPEAAVYTPSGAKWGSAEDLETAKWISSRVKLINPTCKAPDMTSWSNTVRLMRQIDNRSHQDICALYDWASKHHFWQTNILSPESLRKQWDKLTMQRNAGGEQRAVKPDLDFNNTDWAYGVIR</sequence>
<gene>
    <name type="primary">15</name>
</gene>
<protein>
    <recommendedName>
        <fullName>Replication protein 15</fullName>
    </recommendedName>
</protein>
<dbReference type="EMBL" id="X13065">
    <property type="protein sequence ID" value="CAA31474.1"/>
    <property type="molecule type" value="Genomic_DNA"/>
</dbReference>
<dbReference type="EMBL" id="M10670">
    <property type="protein sequence ID" value="AAA32297.1"/>
    <property type="molecule type" value="Genomic_DNA"/>
</dbReference>
<dbReference type="PIR" id="S01776">
    <property type="entry name" value="ORBP15"/>
</dbReference>
<dbReference type="RefSeq" id="YP_007947971.1">
    <property type="nucleotide sequence ID" value="NC_021190.1"/>
</dbReference>
<dbReference type="KEGG" id="vg:24366483"/>
<dbReference type="OrthoDB" id="4785at10239"/>
<dbReference type="GO" id="GO:0003677">
    <property type="term" value="F:DNA binding"/>
    <property type="evidence" value="ECO:0007669"/>
    <property type="project" value="UniProtKB-KW"/>
</dbReference>
<dbReference type="GO" id="GO:0006260">
    <property type="term" value="P:DNA replication"/>
    <property type="evidence" value="ECO:0007669"/>
    <property type="project" value="UniProtKB-KW"/>
</dbReference>
<dbReference type="Gene3D" id="1.10.10.10">
    <property type="entry name" value="Winged helix-like DNA-binding domain superfamily/Winged helix DNA-binding domain"/>
    <property type="match status" value="1"/>
</dbReference>
<dbReference type="InterPro" id="IPR006497">
    <property type="entry name" value="Phage_lambda_VrpO_N"/>
</dbReference>
<dbReference type="InterPro" id="IPR036388">
    <property type="entry name" value="WH-like_DNA-bd_sf"/>
</dbReference>
<dbReference type="NCBIfam" id="TIGR01610">
    <property type="entry name" value="phage_O_Nterm"/>
    <property type="match status" value="1"/>
</dbReference>
<dbReference type="Pfam" id="PF04492">
    <property type="entry name" value="Phage_rep_O"/>
    <property type="match status" value="1"/>
</dbReference>
<evidence type="ECO:0000255" key="1"/>
<evidence type="ECO:0000256" key="2">
    <source>
        <dbReference type="SAM" id="MobiDB-lite"/>
    </source>
</evidence>
<evidence type="ECO:0000305" key="3"/>
<organismHost>
    <name type="scientific">Escherichia coli</name>
    <dbReference type="NCBI Taxonomy" id="562"/>
</organismHost>
<organism>
    <name type="scientific">Enterobacteria phage phi80</name>
    <name type="common">Bacteriophage phi-80</name>
    <dbReference type="NCBI Taxonomy" id="10713"/>
    <lineage>
        <taxon>Viruses</taxon>
        <taxon>Duplodnaviria</taxon>
        <taxon>Heunggongvirae</taxon>
        <taxon>Uroviricota</taxon>
        <taxon>Caudoviricetes</taxon>
    </lineage>
</organism>
<reference key="1">
    <citation type="journal article" date="1988" name="J. Mol. Biol.">
        <title>Organization of the early region of bacteriophage phi 80. Genes and proteins.</title>
        <authorList>
            <person name="Ogawa T."/>
            <person name="Ogawa H."/>
            <person name="Tomizawa J."/>
        </authorList>
    </citation>
    <scope>NUCLEOTIDE SEQUENCE [GENOMIC DNA]</scope>
</reference>
<reference key="2">
    <citation type="journal article" date="1979" name="Nature">
        <title>DNA sequences and structural homologies of the replication origins of lambdoid bacteriophages.</title>
        <authorList>
            <person name="Grosschedl R."/>
            <person name="Hobom G."/>
        </authorList>
    </citation>
    <scope>NUCLEOTIDE SEQUENCE [GENOMIC DNA] OF 109-186</scope>
</reference>
<feature type="chain" id="PRO_0000077703" description="Replication protein 15">
    <location>
        <begin position="1"/>
        <end position="302"/>
    </location>
</feature>
<feature type="DNA-binding region" description="H-T-H motif" evidence="1">
    <location>
        <begin position="71"/>
        <end position="90"/>
    </location>
</feature>
<feature type="region of interest" description="Disordered" evidence="2">
    <location>
        <begin position="1"/>
        <end position="20"/>
    </location>
</feature>
<feature type="region of interest" description="Disordered" evidence="2">
    <location>
        <begin position="152"/>
        <end position="172"/>
    </location>
</feature>
<feature type="compositionally biased region" description="Polar residues" evidence="2">
    <location>
        <begin position="1"/>
        <end position="15"/>
    </location>
</feature>
<feature type="compositionally biased region" description="Low complexity" evidence="2">
    <location>
        <begin position="152"/>
        <end position="163"/>
    </location>
</feature>
<proteinExistence type="inferred from homology"/>
<keyword id="KW-0235">DNA replication</keyword>
<keyword id="KW-0238">DNA-binding</keyword>
<keyword id="KW-0244">Early protein</keyword>
<accession>P14815</accession>